<comment type="function">
    <text evidence="1">Catalyzes the dehydration of methylthioribulose-1-phosphate (MTRu-1-P) into 2,3-diketo-5-methylthiopentyl-1-phosphate (DK-MTP-1-P).</text>
</comment>
<comment type="catalytic activity">
    <reaction evidence="1">
        <text>5-(methylsulfanyl)-D-ribulose 1-phosphate = 5-methylsulfanyl-2,3-dioxopentyl phosphate + H2O</text>
        <dbReference type="Rhea" id="RHEA:15549"/>
        <dbReference type="ChEBI" id="CHEBI:15377"/>
        <dbReference type="ChEBI" id="CHEBI:58548"/>
        <dbReference type="ChEBI" id="CHEBI:58828"/>
        <dbReference type="EC" id="4.2.1.109"/>
    </reaction>
</comment>
<comment type="cofactor">
    <cofactor evidence="1">
        <name>Zn(2+)</name>
        <dbReference type="ChEBI" id="CHEBI:29105"/>
    </cofactor>
    <text evidence="1">Binds 1 zinc ion per subunit.</text>
</comment>
<comment type="pathway">
    <text evidence="1">Amino-acid biosynthesis; L-methionine biosynthesis via salvage pathway; L-methionine from S-methyl-5-thio-alpha-D-ribose 1-phosphate: step 2/6.</text>
</comment>
<comment type="subcellular location">
    <subcellularLocation>
        <location evidence="1 2">Cytoplasm</location>
    </subcellularLocation>
    <subcellularLocation>
        <location evidence="2">Nucleus</location>
    </subcellularLocation>
</comment>
<comment type="similarity">
    <text evidence="1">Belongs to the aldolase class II family. MtnB subfamily.</text>
</comment>
<gene>
    <name evidence="1" type="primary">mde1</name>
    <name type="ORF">SPAC20H4.05c</name>
</gene>
<organism>
    <name type="scientific">Schizosaccharomyces pombe (strain 972 / ATCC 24843)</name>
    <name type="common">Fission yeast</name>
    <dbReference type="NCBI Taxonomy" id="284812"/>
    <lineage>
        <taxon>Eukaryota</taxon>
        <taxon>Fungi</taxon>
        <taxon>Dikarya</taxon>
        <taxon>Ascomycota</taxon>
        <taxon>Taphrinomycotina</taxon>
        <taxon>Schizosaccharomycetes</taxon>
        <taxon>Schizosaccharomycetales</taxon>
        <taxon>Schizosaccharomycetaceae</taxon>
        <taxon>Schizosaccharomyces</taxon>
    </lineage>
</organism>
<evidence type="ECO:0000255" key="1">
    <source>
        <dbReference type="HAMAP-Rule" id="MF_03116"/>
    </source>
</evidence>
<evidence type="ECO:0000269" key="2">
    <source>
    </source>
</evidence>
<evidence type="ECO:0000305" key="3"/>
<proteinExistence type="inferred from homology"/>
<keyword id="KW-0028">Amino-acid biosynthesis</keyword>
<keyword id="KW-0963">Cytoplasm</keyword>
<keyword id="KW-0456">Lyase</keyword>
<keyword id="KW-0479">Metal-binding</keyword>
<keyword id="KW-0486">Methionine biosynthesis</keyword>
<keyword id="KW-0539">Nucleus</keyword>
<keyword id="KW-1185">Reference proteome</keyword>
<keyword id="KW-0862">Zinc</keyword>
<dbReference type="EC" id="4.2.1.109" evidence="1"/>
<dbReference type="EMBL" id="CU329670">
    <property type="protein sequence ID" value="CAC19735.2"/>
    <property type="molecule type" value="Genomic_DNA"/>
</dbReference>
<dbReference type="RefSeq" id="NP_593625.2">
    <property type="nucleotide sequence ID" value="NM_001019056.2"/>
</dbReference>
<dbReference type="SMR" id="Q9HE08"/>
<dbReference type="BioGRID" id="278493">
    <property type="interactions" value="9"/>
</dbReference>
<dbReference type="FunCoup" id="Q9HE08">
    <property type="interactions" value="436"/>
</dbReference>
<dbReference type="STRING" id="284812.Q9HE08"/>
<dbReference type="iPTMnet" id="Q9HE08"/>
<dbReference type="PaxDb" id="4896-SPAC20H4.05c.1"/>
<dbReference type="EnsemblFungi" id="SPAC20H4.05c.1">
    <property type="protein sequence ID" value="SPAC20H4.05c.1:pep"/>
    <property type="gene ID" value="SPAC20H4.05c"/>
</dbReference>
<dbReference type="GeneID" id="2542010"/>
<dbReference type="KEGG" id="spo:2542010"/>
<dbReference type="PomBase" id="SPAC20H4.05c">
    <property type="gene designation" value="mde1"/>
</dbReference>
<dbReference type="VEuPathDB" id="FungiDB:SPAC20H4.05c"/>
<dbReference type="eggNOG" id="KOG2631">
    <property type="taxonomic scope" value="Eukaryota"/>
</dbReference>
<dbReference type="HOGENOM" id="CLU_006033_4_0_1"/>
<dbReference type="InParanoid" id="Q9HE08"/>
<dbReference type="OMA" id="WFPGTSG"/>
<dbReference type="UniPathway" id="UPA00904">
    <property type="reaction ID" value="UER00875"/>
</dbReference>
<dbReference type="PRO" id="PR:Q9HE08"/>
<dbReference type="Proteomes" id="UP000002485">
    <property type="component" value="Chromosome I"/>
</dbReference>
<dbReference type="GO" id="GO:0005737">
    <property type="term" value="C:cytoplasm"/>
    <property type="evidence" value="ECO:0000318"/>
    <property type="project" value="GO_Central"/>
</dbReference>
<dbReference type="GO" id="GO:0005829">
    <property type="term" value="C:cytosol"/>
    <property type="evidence" value="ECO:0007005"/>
    <property type="project" value="PomBase"/>
</dbReference>
<dbReference type="GO" id="GO:0005634">
    <property type="term" value="C:nucleus"/>
    <property type="evidence" value="ECO:0007005"/>
    <property type="project" value="PomBase"/>
</dbReference>
<dbReference type="GO" id="GO:0046570">
    <property type="term" value="F:methylthioribulose 1-phosphate dehydratase activity"/>
    <property type="evidence" value="ECO:0000318"/>
    <property type="project" value="GO_Central"/>
</dbReference>
<dbReference type="GO" id="GO:0008270">
    <property type="term" value="F:zinc ion binding"/>
    <property type="evidence" value="ECO:0007669"/>
    <property type="project" value="UniProtKB-UniRule"/>
</dbReference>
<dbReference type="GO" id="GO:0019509">
    <property type="term" value="P:L-methionine salvage from methylthioadenosine"/>
    <property type="evidence" value="ECO:0000318"/>
    <property type="project" value="GO_Central"/>
</dbReference>
<dbReference type="FunFam" id="3.40.225.10:FF:000003">
    <property type="entry name" value="Methylthioribulose-1-phosphate dehydratase"/>
    <property type="match status" value="1"/>
</dbReference>
<dbReference type="Gene3D" id="3.40.225.10">
    <property type="entry name" value="Class II aldolase/adducin N-terminal domain"/>
    <property type="match status" value="1"/>
</dbReference>
<dbReference type="HAMAP" id="MF_03116">
    <property type="entry name" value="Salvage_MtnB_euk"/>
    <property type="match status" value="1"/>
</dbReference>
<dbReference type="InterPro" id="IPR001303">
    <property type="entry name" value="Aldolase_II/adducin_N"/>
</dbReference>
<dbReference type="InterPro" id="IPR036409">
    <property type="entry name" value="Aldolase_II/adducin_N_sf"/>
</dbReference>
<dbReference type="InterPro" id="IPR017714">
    <property type="entry name" value="MethylthioRu-1-P_deHdtase_MtnB"/>
</dbReference>
<dbReference type="InterPro" id="IPR027514">
    <property type="entry name" value="Salvage_MtnB_euk"/>
</dbReference>
<dbReference type="NCBIfam" id="TIGR03328">
    <property type="entry name" value="salvage_mtnB"/>
    <property type="match status" value="1"/>
</dbReference>
<dbReference type="PANTHER" id="PTHR10640">
    <property type="entry name" value="METHYLTHIORIBULOSE-1-PHOSPHATE DEHYDRATASE"/>
    <property type="match status" value="1"/>
</dbReference>
<dbReference type="PANTHER" id="PTHR10640:SF7">
    <property type="entry name" value="METHYLTHIORIBULOSE-1-PHOSPHATE DEHYDRATASE"/>
    <property type="match status" value="1"/>
</dbReference>
<dbReference type="Pfam" id="PF00596">
    <property type="entry name" value="Aldolase_II"/>
    <property type="match status" value="1"/>
</dbReference>
<dbReference type="SMART" id="SM01007">
    <property type="entry name" value="Aldolase_II"/>
    <property type="match status" value="1"/>
</dbReference>
<dbReference type="SUPFAM" id="SSF53639">
    <property type="entry name" value="AraD/HMP-PK domain-like"/>
    <property type="match status" value="1"/>
</dbReference>
<reference key="1">
    <citation type="journal article" date="2002" name="Nature">
        <title>The genome sequence of Schizosaccharomyces pombe.</title>
        <authorList>
            <person name="Wood V."/>
            <person name="Gwilliam R."/>
            <person name="Rajandream M.A."/>
            <person name="Lyne M.H."/>
            <person name="Lyne R."/>
            <person name="Stewart A."/>
            <person name="Sgouros J.G."/>
            <person name="Peat N."/>
            <person name="Hayles J."/>
            <person name="Baker S.G."/>
            <person name="Basham D."/>
            <person name="Bowman S."/>
            <person name="Brooks K."/>
            <person name="Brown D."/>
            <person name="Brown S."/>
            <person name="Chillingworth T."/>
            <person name="Churcher C.M."/>
            <person name="Collins M."/>
            <person name="Connor R."/>
            <person name="Cronin A."/>
            <person name="Davis P."/>
            <person name="Feltwell T."/>
            <person name="Fraser A."/>
            <person name="Gentles S."/>
            <person name="Goble A."/>
            <person name="Hamlin N."/>
            <person name="Harris D.E."/>
            <person name="Hidalgo J."/>
            <person name="Hodgson G."/>
            <person name="Holroyd S."/>
            <person name="Hornsby T."/>
            <person name="Howarth S."/>
            <person name="Huckle E.J."/>
            <person name="Hunt S."/>
            <person name="Jagels K."/>
            <person name="James K.D."/>
            <person name="Jones L."/>
            <person name="Jones M."/>
            <person name="Leather S."/>
            <person name="McDonald S."/>
            <person name="McLean J."/>
            <person name="Mooney P."/>
            <person name="Moule S."/>
            <person name="Mungall K.L."/>
            <person name="Murphy L.D."/>
            <person name="Niblett D."/>
            <person name="Odell C."/>
            <person name="Oliver K."/>
            <person name="O'Neil S."/>
            <person name="Pearson D."/>
            <person name="Quail M.A."/>
            <person name="Rabbinowitsch E."/>
            <person name="Rutherford K.M."/>
            <person name="Rutter S."/>
            <person name="Saunders D."/>
            <person name="Seeger K."/>
            <person name="Sharp S."/>
            <person name="Skelton J."/>
            <person name="Simmonds M.N."/>
            <person name="Squares R."/>
            <person name="Squares S."/>
            <person name="Stevens K."/>
            <person name="Taylor K."/>
            <person name="Taylor R.G."/>
            <person name="Tivey A."/>
            <person name="Walsh S.V."/>
            <person name="Warren T."/>
            <person name="Whitehead S."/>
            <person name="Woodward J.R."/>
            <person name="Volckaert G."/>
            <person name="Aert R."/>
            <person name="Robben J."/>
            <person name="Grymonprez B."/>
            <person name="Weltjens I."/>
            <person name="Vanstreels E."/>
            <person name="Rieger M."/>
            <person name="Schaefer M."/>
            <person name="Mueller-Auer S."/>
            <person name="Gabel C."/>
            <person name="Fuchs M."/>
            <person name="Duesterhoeft A."/>
            <person name="Fritzc C."/>
            <person name="Holzer E."/>
            <person name="Moestl D."/>
            <person name="Hilbert H."/>
            <person name="Borzym K."/>
            <person name="Langer I."/>
            <person name="Beck A."/>
            <person name="Lehrach H."/>
            <person name="Reinhardt R."/>
            <person name="Pohl T.M."/>
            <person name="Eger P."/>
            <person name="Zimmermann W."/>
            <person name="Wedler H."/>
            <person name="Wambutt R."/>
            <person name="Purnelle B."/>
            <person name="Goffeau A."/>
            <person name="Cadieu E."/>
            <person name="Dreano S."/>
            <person name="Gloux S."/>
            <person name="Lelaure V."/>
            <person name="Mottier S."/>
            <person name="Galibert F."/>
            <person name="Aves S.J."/>
            <person name="Xiang Z."/>
            <person name="Hunt C."/>
            <person name="Moore K."/>
            <person name="Hurst S.M."/>
            <person name="Lucas M."/>
            <person name="Rochet M."/>
            <person name="Gaillardin C."/>
            <person name="Tallada V.A."/>
            <person name="Garzon A."/>
            <person name="Thode G."/>
            <person name="Daga R.R."/>
            <person name="Cruzado L."/>
            <person name="Jimenez J."/>
            <person name="Sanchez M."/>
            <person name="del Rey F."/>
            <person name="Benito J."/>
            <person name="Dominguez A."/>
            <person name="Revuelta J.L."/>
            <person name="Moreno S."/>
            <person name="Armstrong J."/>
            <person name="Forsburg S.L."/>
            <person name="Cerutti L."/>
            <person name="Lowe T."/>
            <person name="McCombie W.R."/>
            <person name="Paulsen I."/>
            <person name="Potashkin J."/>
            <person name="Shpakovski G.V."/>
            <person name="Ussery D."/>
            <person name="Barrell B.G."/>
            <person name="Nurse P."/>
        </authorList>
    </citation>
    <scope>NUCLEOTIDE SEQUENCE [LARGE SCALE GENOMIC DNA]</scope>
    <source>
        <strain>972 / ATCC 24843</strain>
    </source>
</reference>
<reference key="2">
    <citation type="journal article" date="2011" name="Science">
        <title>Comparative functional genomics of the fission yeasts.</title>
        <authorList>
            <person name="Rhind N."/>
            <person name="Chen Z."/>
            <person name="Yassour M."/>
            <person name="Thompson D.A."/>
            <person name="Haas B.J."/>
            <person name="Habib N."/>
            <person name="Wapinski I."/>
            <person name="Roy S."/>
            <person name="Lin M.F."/>
            <person name="Heiman D.I."/>
            <person name="Young S.K."/>
            <person name="Furuya K."/>
            <person name="Guo Y."/>
            <person name="Pidoux A."/>
            <person name="Chen H.M."/>
            <person name="Robbertse B."/>
            <person name="Goldberg J.M."/>
            <person name="Aoki K."/>
            <person name="Bayne E.H."/>
            <person name="Berlin A.M."/>
            <person name="Desjardins C.A."/>
            <person name="Dobbs E."/>
            <person name="Dukaj L."/>
            <person name="Fan L."/>
            <person name="FitzGerald M.G."/>
            <person name="French C."/>
            <person name="Gujja S."/>
            <person name="Hansen K."/>
            <person name="Keifenheim D."/>
            <person name="Levin J.Z."/>
            <person name="Mosher R.A."/>
            <person name="Mueller C.A."/>
            <person name="Pfiffner J."/>
            <person name="Priest M."/>
            <person name="Russ C."/>
            <person name="Smialowska A."/>
            <person name="Swoboda P."/>
            <person name="Sykes S.M."/>
            <person name="Vaughn M."/>
            <person name="Vengrova S."/>
            <person name="Yoder R."/>
            <person name="Zeng Q."/>
            <person name="Allshire R."/>
            <person name="Baulcombe D."/>
            <person name="Birren B.W."/>
            <person name="Brown W."/>
            <person name="Ekwall K."/>
            <person name="Kellis M."/>
            <person name="Leatherwood J."/>
            <person name="Levin H."/>
            <person name="Margalit H."/>
            <person name="Martienssen R."/>
            <person name="Nieduszynski C.A."/>
            <person name="Spatafora J.W."/>
            <person name="Friedman N."/>
            <person name="Dalgaard J.Z."/>
            <person name="Baumann P."/>
            <person name="Niki H."/>
            <person name="Regev A."/>
            <person name="Nusbaum C."/>
        </authorList>
    </citation>
    <scope>REVISION OF GENE MODEL</scope>
</reference>
<reference evidence="3" key="3">
    <citation type="journal article" date="2006" name="Nat. Biotechnol.">
        <title>ORFeome cloning and global analysis of protein localization in the fission yeast Schizosaccharomyces pombe.</title>
        <authorList>
            <person name="Matsuyama A."/>
            <person name="Arai R."/>
            <person name="Yashiroda Y."/>
            <person name="Shirai A."/>
            <person name="Kamata A."/>
            <person name="Sekido S."/>
            <person name="Kobayashi Y."/>
            <person name="Hashimoto A."/>
            <person name="Hamamoto M."/>
            <person name="Hiraoka Y."/>
            <person name="Horinouchi S."/>
            <person name="Yoshida M."/>
        </authorList>
    </citation>
    <scope>SUBCELLULAR LOCATION [LARGE SCALE ANALYSIS]</scope>
</reference>
<accession>Q9HE08</accession>
<sequence>MDDFLKKDLGCLRSGDLKKCGELICEICRDLYTSGWVTGTGGGITIRSGDAIVIAPSGVQKERMELHHLFVMSLITREYMRMPALRLKPSQCTPLFLAVYTLRDAYACIHTHSQEAILLSTLFADSDHFSATGFEVLSYIPKGSKNNGFHKPTDKIKIPFINNTAHESDLHDSLQEAINLYPDTCAVIVRDHGIYCWGDTWQDTKMNTEAVEFLFQAYLRRRRLQKPE</sequence>
<protein>
    <recommendedName>
        <fullName evidence="1">Methylthioribulose-1-phosphate dehydratase</fullName>
        <shortName evidence="1">MTRu-1-P dehydratase</shortName>
        <ecNumber evidence="1">4.2.1.109</ecNumber>
    </recommendedName>
</protein>
<feature type="chain" id="PRO_0000315888" description="Methylthioribulose-1-phosphate dehydratase">
    <location>
        <begin position="1"/>
        <end position="228"/>
    </location>
</feature>
<feature type="active site" description="Proton donor/acceptor" evidence="1">
    <location>
        <position position="135"/>
    </location>
</feature>
<feature type="binding site" evidence="1">
    <location>
        <position position="92"/>
    </location>
    <ligand>
        <name>substrate</name>
    </ligand>
</feature>
<feature type="binding site" evidence="1">
    <location>
        <position position="110"/>
    </location>
    <ligand>
        <name>Zn(2+)</name>
        <dbReference type="ChEBI" id="CHEBI:29105"/>
    </ligand>
</feature>
<feature type="binding site" evidence="1">
    <location>
        <position position="112"/>
    </location>
    <ligand>
        <name>Zn(2+)</name>
        <dbReference type="ChEBI" id="CHEBI:29105"/>
    </ligand>
</feature>
<feature type="binding site" evidence="1">
    <location>
        <position position="192"/>
    </location>
    <ligand>
        <name>Zn(2+)</name>
        <dbReference type="ChEBI" id="CHEBI:29105"/>
    </ligand>
</feature>
<name>MTNB_SCHPO</name>